<reference key="1">
    <citation type="journal article" date="2008" name="PLoS Genet.">
        <title>Genomic islands in the pathogenic filamentous fungus Aspergillus fumigatus.</title>
        <authorList>
            <person name="Fedorova N.D."/>
            <person name="Khaldi N."/>
            <person name="Joardar V.S."/>
            <person name="Maiti R."/>
            <person name="Amedeo P."/>
            <person name="Anderson M.J."/>
            <person name="Crabtree J."/>
            <person name="Silva J.C."/>
            <person name="Badger J.H."/>
            <person name="Albarraq A."/>
            <person name="Angiuoli S."/>
            <person name="Bussey H."/>
            <person name="Bowyer P."/>
            <person name="Cotty P.J."/>
            <person name="Dyer P.S."/>
            <person name="Egan A."/>
            <person name="Galens K."/>
            <person name="Fraser-Liggett C.M."/>
            <person name="Haas B.J."/>
            <person name="Inman J.M."/>
            <person name="Kent R."/>
            <person name="Lemieux S."/>
            <person name="Malavazi I."/>
            <person name="Orvis J."/>
            <person name="Roemer T."/>
            <person name="Ronning C.M."/>
            <person name="Sundaram J.P."/>
            <person name="Sutton G."/>
            <person name="Turner G."/>
            <person name="Venter J.C."/>
            <person name="White O.R."/>
            <person name="Whitty B.R."/>
            <person name="Youngman P."/>
            <person name="Wolfe K.H."/>
            <person name="Goldman G.H."/>
            <person name="Wortman J.R."/>
            <person name="Jiang B."/>
            <person name="Denning D.W."/>
            <person name="Nierman W.C."/>
        </authorList>
    </citation>
    <scope>NUCLEOTIDE SEQUENCE [LARGE SCALE GENOMIC DNA]</scope>
    <source>
        <strain>ATCC 1020 / DSM 3700 / CBS 544.65 / FGSC A1164 / JCM 1740 / NRRL 181 / WB 181</strain>
    </source>
</reference>
<feature type="propeptide" id="PRO_0000333658" evidence="2">
    <location>
        <begin position="1"/>
        <end status="unknown"/>
    </location>
</feature>
<feature type="chain" id="PRO_0000333659" description="Metacaspase-1B">
    <location>
        <begin status="unknown"/>
        <end position="411"/>
    </location>
</feature>
<feature type="region of interest" description="Disordered" evidence="3">
    <location>
        <begin position="1"/>
        <end position="97"/>
    </location>
</feature>
<feature type="compositionally biased region" description="Pro residues" evidence="3">
    <location>
        <begin position="7"/>
        <end position="65"/>
    </location>
</feature>
<feature type="active site" evidence="1">
    <location>
        <position position="198"/>
    </location>
</feature>
<feature type="active site" evidence="1">
    <location>
        <position position="254"/>
    </location>
</feature>
<organism>
    <name type="scientific">Neosartorya fischeri (strain ATCC 1020 / DSM 3700 / CBS 544.65 / FGSC A1164 / JCM 1740 / NRRL 181 / WB 181)</name>
    <name type="common">Aspergillus fischerianus</name>
    <dbReference type="NCBI Taxonomy" id="331117"/>
    <lineage>
        <taxon>Eukaryota</taxon>
        <taxon>Fungi</taxon>
        <taxon>Dikarya</taxon>
        <taxon>Ascomycota</taxon>
        <taxon>Pezizomycotina</taxon>
        <taxon>Eurotiomycetes</taxon>
        <taxon>Eurotiomycetidae</taxon>
        <taxon>Eurotiales</taxon>
        <taxon>Aspergillaceae</taxon>
        <taxon>Aspergillus</taxon>
        <taxon>Aspergillus subgen. Fumigati</taxon>
    </lineage>
</organism>
<comment type="function">
    <text evidence="1">Involved in cell death (apoptosis).</text>
</comment>
<comment type="similarity">
    <text evidence="4">Belongs to the peptidase C14B family.</text>
</comment>
<gene>
    <name type="primary">casB</name>
    <name type="ORF">NFIA_063160</name>
</gene>
<dbReference type="EC" id="3.4.22.-"/>
<dbReference type="EMBL" id="DS027690">
    <property type="protein sequence ID" value="EAW21155.1"/>
    <property type="molecule type" value="Genomic_DNA"/>
</dbReference>
<dbReference type="RefSeq" id="XP_001263052.1">
    <property type="nucleotide sequence ID" value="XM_001263051.1"/>
</dbReference>
<dbReference type="SMR" id="A1D611"/>
<dbReference type="STRING" id="331117.A1D611"/>
<dbReference type="EnsemblFungi" id="EAW21155">
    <property type="protein sequence ID" value="EAW21155"/>
    <property type="gene ID" value="NFIA_063160"/>
</dbReference>
<dbReference type="GeneID" id="4589807"/>
<dbReference type="KEGG" id="nfi:NFIA_063160"/>
<dbReference type="VEuPathDB" id="FungiDB:NFIA_063160"/>
<dbReference type="eggNOG" id="KOG1546">
    <property type="taxonomic scope" value="Eukaryota"/>
</dbReference>
<dbReference type="HOGENOM" id="CLU_029389_0_0_1"/>
<dbReference type="OMA" id="DEMHNIM"/>
<dbReference type="OrthoDB" id="3223806at2759"/>
<dbReference type="Proteomes" id="UP000006702">
    <property type="component" value="Unassembled WGS sequence"/>
</dbReference>
<dbReference type="GO" id="GO:0005737">
    <property type="term" value="C:cytoplasm"/>
    <property type="evidence" value="ECO:0007669"/>
    <property type="project" value="TreeGrafter"/>
</dbReference>
<dbReference type="GO" id="GO:0004197">
    <property type="term" value="F:cysteine-type endopeptidase activity"/>
    <property type="evidence" value="ECO:0007669"/>
    <property type="project" value="InterPro"/>
</dbReference>
<dbReference type="GO" id="GO:0006915">
    <property type="term" value="P:apoptotic process"/>
    <property type="evidence" value="ECO:0007669"/>
    <property type="project" value="UniProtKB-KW"/>
</dbReference>
<dbReference type="GO" id="GO:0006508">
    <property type="term" value="P:proteolysis"/>
    <property type="evidence" value="ECO:0007669"/>
    <property type="project" value="UniProtKB-KW"/>
</dbReference>
<dbReference type="Gene3D" id="3.40.50.12660">
    <property type="match status" value="1"/>
</dbReference>
<dbReference type="InterPro" id="IPR029030">
    <property type="entry name" value="Caspase-like_dom_sf"/>
</dbReference>
<dbReference type="InterPro" id="IPR050452">
    <property type="entry name" value="Metacaspase"/>
</dbReference>
<dbReference type="InterPro" id="IPR011600">
    <property type="entry name" value="Pept_C14_caspase"/>
</dbReference>
<dbReference type="PANTHER" id="PTHR48104:SF23">
    <property type="entry name" value="METACASPASE (EUROFUNG)"/>
    <property type="match status" value="1"/>
</dbReference>
<dbReference type="PANTHER" id="PTHR48104">
    <property type="entry name" value="METACASPASE-4"/>
    <property type="match status" value="1"/>
</dbReference>
<dbReference type="Pfam" id="PF00656">
    <property type="entry name" value="Peptidase_C14"/>
    <property type="match status" value="1"/>
</dbReference>
<dbReference type="SUPFAM" id="SSF52129">
    <property type="entry name" value="Caspase-like"/>
    <property type="match status" value="1"/>
</dbReference>
<accession>A1D611</accession>
<protein>
    <recommendedName>
        <fullName>Metacaspase-1B</fullName>
        <ecNumber>3.4.22.-</ecNumber>
    </recommendedName>
</protein>
<name>MCA1B_NEOFI</name>
<evidence type="ECO:0000250" key="1"/>
<evidence type="ECO:0000255" key="2"/>
<evidence type="ECO:0000256" key="3">
    <source>
        <dbReference type="SAM" id="MobiDB-lite"/>
    </source>
</evidence>
<evidence type="ECO:0000305" key="4"/>
<proteinExistence type="inferred from homology"/>
<keyword id="KW-0053">Apoptosis</keyword>
<keyword id="KW-0378">Hydrolase</keyword>
<keyword id="KW-0645">Protease</keyword>
<keyword id="KW-1185">Reference proteome</keyword>
<keyword id="KW-0788">Thiol protease</keyword>
<keyword id="KW-0865">Zymogen</keyword>
<sequence>MYHRHSAPPPPGRSRGYPPPQQQWPPQPYQYLPYPPQGPPPAHTFPPPAHRSYPSPYPTPPPHSPSPYQYPHHGHSQSWSAPALPPRPPLEAQQFGNGAPSHYRFQYSACTGRRRALLIGINYIGQPNQLRGCINDVTNMSTFLHERYGYRREDMVILTDDQKNPLSIPTKANILRAMQWLVKDAQPNDSLFLHFSGHGGRTPDLDGDEEDGYDDVIYPVDYRVAGHIVDDEMHNIMVRPLRPGVRLTVIFDSCHSGTALDLPYVYSTQGILKEPNLAKEAAQDLFSAISSYGKGDLSGVAMTAIGFLKKAAKGDSARKRTVMTKTSPADVVMFSGSKDTQTSADTFQDGEARGALSWAFIKSLRQWPNQSYLQLLNSIRAQLEGKYTQKPQLSCSHPLGAWVMRAIEEPA</sequence>